<dbReference type="EMBL" id="CP001096">
    <property type="protein sequence ID" value="ACF02164.1"/>
    <property type="molecule type" value="Genomic_DNA"/>
</dbReference>
<dbReference type="RefSeq" id="WP_011158792.1">
    <property type="nucleotide sequence ID" value="NC_011004.1"/>
</dbReference>
<dbReference type="SMR" id="B3QBX7"/>
<dbReference type="GeneID" id="66894333"/>
<dbReference type="KEGG" id="rpt:Rpal_3664"/>
<dbReference type="HOGENOM" id="CLU_036235_2_1_5"/>
<dbReference type="OrthoDB" id="9778722at2"/>
<dbReference type="Proteomes" id="UP000001725">
    <property type="component" value="Chromosome"/>
</dbReference>
<dbReference type="GO" id="GO:0015934">
    <property type="term" value="C:large ribosomal subunit"/>
    <property type="evidence" value="ECO:0007669"/>
    <property type="project" value="InterPro"/>
</dbReference>
<dbReference type="GO" id="GO:0019843">
    <property type="term" value="F:rRNA binding"/>
    <property type="evidence" value="ECO:0007669"/>
    <property type="project" value="UniProtKB-UniRule"/>
</dbReference>
<dbReference type="GO" id="GO:0003735">
    <property type="term" value="F:structural constituent of ribosome"/>
    <property type="evidence" value="ECO:0007669"/>
    <property type="project" value="InterPro"/>
</dbReference>
<dbReference type="GO" id="GO:0016740">
    <property type="term" value="F:transferase activity"/>
    <property type="evidence" value="ECO:0007669"/>
    <property type="project" value="InterPro"/>
</dbReference>
<dbReference type="GO" id="GO:0002181">
    <property type="term" value="P:cytoplasmic translation"/>
    <property type="evidence" value="ECO:0007669"/>
    <property type="project" value="TreeGrafter"/>
</dbReference>
<dbReference type="FunFam" id="2.30.30.30:FF:000055">
    <property type="entry name" value="50S ribosomal protein L2"/>
    <property type="match status" value="1"/>
</dbReference>
<dbReference type="FunFam" id="2.40.50.140:FF:000003">
    <property type="entry name" value="50S ribosomal protein L2"/>
    <property type="match status" value="1"/>
</dbReference>
<dbReference type="FunFam" id="4.10.950.10:FF:000001">
    <property type="entry name" value="50S ribosomal protein L2"/>
    <property type="match status" value="1"/>
</dbReference>
<dbReference type="Gene3D" id="2.30.30.30">
    <property type="match status" value="1"/>
</dbReference>
<dbReference type="Gene3D" id="2.40.50.140">
    <property type="entry name" value="Nucleic acid-binding proteins"/>
    <property type="match status" value="1"/>
</dbReference>
<dbReference type="Gene3D" id="4.10.950.10">
    <property type="entry name" value="Ribosomal protein L2, domain 3"/>
    <property type="match status" value="1"/>
</dbReference>
<dbReference type="HAMAP" id="MF_01320_B">
    <property type="entry name" value="Ribosomal_uL2_B"/>
    <property type="match status" value="1"/>
</dbReference>
<dbReference type="InterPro" id="IPR012340">
    <property type="entry name" value="NA-bd_OB-fold"/>
</dbReference>
<dbReference type="InterPro" id="IPR014722">
    <property type="entry name" value="Rib_uL2_dom2"/>
</dbReference>
<dbReference type="InterPro" id="IPR002171">
    <property type="entry name" value="Ribosomal_uL2"/>
</dbReference>
<dbReference type="InterPro" id="IPR005880">
    <property type="entry name" value="Ribosomal_uL2_bac/org-type"/>
</dbReference>
<dbReference type="InterPro" id="IPR022669">
    <property type="entry name" value="Ribosomal_uL2_C"/>
</dbReference>
<dbReference type="InterPro" id="IPR022671">
    <property type="entry name" value="Ribosomal_uL2_CS"/>
</dbReference>
<dbReference type="InterPro" id="IPR014726">
    <property type="entry name" value="Ribosomal_uL2_dom3"/>
</dbReference>
<dbReference type="InterPro" id="IPR022666">
    <property type="entry name" value="Ribosomal_uL2_RNA-bd_dom"/>
</dbReference>
<dbReference type="InterPro" id="IPR008991">
    <property type="entry name" value="Translation_prot_SH3-like_sf"/>
</dbReference>
<dbReference type="NCBIfam" id="TIGR01171">
    <property type="entry name" value="rplB_bact"/>
    <property type="match status" value="1"/>
</dbReference>
<dbReference type="PANTHER" id="PTHR13691:SF5">
    <property type="entry name" value="LARGE RIBOSOMAL SUBUNIT PROTEIN UL2M"/>
    <property type="match status" value="1"/>
</dbReference>
<dbReference type="PANTHER" id="PTHR13691">
    <property type="entry name" value="RIBOSOMAL PROTEIN L2"/>
    <property type="match status" value="1"/>
</dbReference>
<dbReference type="Pfam" id="PF00181">
    <property type="entry name" value="Ribosomal_L2"/>
    <property type="match status" value="1"/>
</dbReference>
<dbReference type="Pfam" id="PF03947">
    <property type="entry name" value="Ribosomal_L2_C"/>
    <property type="match status" value="1"/>
</dbReference>
<dbReference type="PIRSF" id="PIRSF002158">
    <property type="entry name" value="Ribosomal_L2"/>
    <property type="match status" value="1"/>
</dbReference>
<dbReference type="SMART" id="SM01383">
    <property type="entry name" value="Ribosomal_L2"/>
    <property type="match status" value="1"/>
</dbReference>
<dbReference type="SMART" id="SM01382">
    <property type="entry name" value="Ribosomal_L2_C"/>
    <property type="match status" value="1"/>
</dbReference>
<dbReference type="SUPFAM" id="SSF50249">
    <property type="entry name" value="Nucleic acid-binding proteins"/>
    <property type="match status" value="1"/>
</dbReference>
<dbReference type="SUPFAM" id="SSF50104">
    <property type="entry name" value="Translation proteins SH3-like domain"/>
    <property type="match status" value="1"/>
</dbReference>
<dbReference type="PROSITE" id="PS00467">
    <property type="entry name" value="RIBOSOMAL_L2"/>
    <property type="match status" value="1"/>
</dbReference>
<evidence type="ECO:0000255" key="1">
    <source>
        <dbReference type="HAMAP-Rule" id="MF_01320"/>
    </source>
</evidence>
<evidence type="ECO:0000256" key="2">
    <source>
        <dbReference type="SAM" id="MobiDB-lite"/>
    </source>
</evidence>
<evidence type="ECO:0000305" key="3"/>
<reference key="1">
    <citation type="submission" date="2008-05" db="EMBL/GenBank/DDBJ databases">
        <title>Complete sequence of Rhodopseudomonas palustris TIE-1.</title>
        <authorList>
            <consortium name="US DOE Joint Genome Institute"/>
            <person name="Lucas S."/>
            <person name="Copeland A."/>
            <person name="Lapidus A."/>
            <person name="Glavina del Rio T."/>
            <person name="Dalin E."/>
            <person name="Tice H."/>
            <person name="Pitluck S."/>
            <person name="Chain P."/>
            <person name="Malfatti S."/>
            <person name="Shin M."/>
            <person name="Vergez L."/>
            <person name="Lang D."/>
            <person name="Schmutz J."/>
            <person name="Larimer F."/>
            <person name="Land M."/>
            <person name="Hauser L."/>
            <person name="Kyrpides N."/>
            <person name="Mikhailova N."/>
            <person name="Emerson D."/>
            <person name="Newman D.K."/>
            <person name="Roden E."/>
            <person name="Richardson P."/>
        </authorList>
    </citation>
    <scope>NUCLEOTIDE SEQUENCE [LARGE SCALE GENOMIC DNA]</scope>
    <source>
        <strain>TIE-1</strain>
    </source>
</reference>
<name>RL2_RHOPT</name>
<organism>
    <name type="scientific">Rhodopseudomonas palustris (strain TIE-1)</name>
    <dbReference type="NCBI Taxonomy" id="395960"/>
    <lineage>
        <taxon>Bacteria</taxon>
        <taxon>Pseudomonadati</taxon>
        <taxon>Pseudomonadota</taxon>
        <taxon>Alphaproteobacteria</taxon>
        <taxon>Hyphomicrobiales</taxon>
        <taxon>Nitrobacteraceae</taxon>
        <taxon>Rhodopseudomonas</taxon>
    </lineage>
</organism>
<protein>
    <recommendedName>
        <fullName evidence="1">Large ribosomal subunit protein uL2</fullName>
    </recommendedName>
    <alternativeName>
        <fullName evidence="3">50S ribosomal protein L2</fullName>
    </alternativeName>
</protein>
<comment type="function">
    <text evidence="1">One of the primary rRNA binding proteins. Required for association of the 30S and 50S subunits to form the 70S ribosome, for tRNA binding and peptide bond formation. It has been suggested to have peptidyltransferase activity; this is somewhat controversial. Makes several contacts with the 16S rRNA in the 70S ribosome.</text>
</comment>
<comment type="subunit">
    <text evidence="1">Part of the 50S ribosomal subunit. Forms a bridge to the 30S subunit in the 70S ribosome.</text>
</comment>
<comment type="similarity">
    <text evidence="1">Belongs to the universal ribosomal protein uL2 family.</text>
</comment>
<sequence>MALKTFNPTTPGQRQLVMVDRSALYKGKPVKRLTEGKNSNGGRNNTGRITVRFRGGGHKQAYRLVDFKRTKVDVPAKVERLEYDPNRTAFIALIKYEDGEQAYILAPQRLAVGDTVIAGAYVDVKPGNVMPLGNMPIGTIVHNVELKIGKGGQLARSAGTYAQIVGRDHDYVILRMNSGEQRLIHGRCIAAIGAVSNPDHMNISIGKAGRKRWLGRRPHNRGVVMNPIDHPHGGGEGRTSGGRHPVTPWGKPTKGKKTRSNKSTDKFILISRHKRKKK</sequence>
<accession>B3QBX7</accession>
<proteinExistence type="inferred from homology"/>
<keyword id="KW-0687">Ribonucleoprotein</keyword>
<keyword id="KW-0689">Ribosomal protein</keyword>
<keyword id="KW-0694">RNA-binding</keyword>
<keyword id="KW-0699">rRNA-binding</keyword>
<gene>
    <name evidence="1" type="primary">rplB</name>
    <name type="ordered locus">Rpal_3664</name>
</gene>
<feature type="chain" id="PRO_1000141605" description="Large ribosomal subunit protein uL2">
    <location>
        <begin position="1"/>
        <end position="278"/>
    </location>
</feature>
<feature type="region of interest" description="Disordered" evidence="2">
    <location>
        <begin position="222"/>
        <end position="278"/>
    </location>
</feature>